<name>UVRB_BACCZ</name>
<protein>
    <recommendedName>
        <fullName evidence="1">UvrABC system protein B</fullName>
        <shortName evidence="1">Protein UvrB</shortName>
    </recommendedName>
    <alternativeName>
        <fullName evidence="1">Excinuclease ABC subunit B</fullName>
    </alternativeName>
</protein>
<feature type="chain" id="PRO_0000227282" description="UvrABC system protein B">
    <location>
        <begin position="1"/>
        <end position="658"/>
    </location>
</feature>
<feature type="domain" description="Helicase ATP-binding" evidence="1">
    <location>
        <begin position="26"/>
        <end position="413"/>
    </location>
</feature>
<feature type="domain" description="Helicase C-terminal" evidence="1">
    <location>
        <begin position="430"/>
        <end position="596"/>
    </location>
</feature>
<feature type="domain" description="UVR" evidence="1">
    <location>
        <begin position="622"/>
        <end position="657"/>
    </location>
</feature>
<feature type="short sequence motif" description="Beta-hairpin">
    <location>
        <begin position="92"/>
        <end position="115"/>
    </location>
</feature>
<feature type="binding site" evidence="1">
    <location>
        <begin position="39"/>
        <end position="46"/>
    </location>
    <ligand>
        <name>ATP</name>
        <dbReference type="ChEBI" id="CHEBI:30616"/>
    </ligand>
</feature>
<evidence type="ECO:0000255" key="1">
    <source>
        <dbReference type="HAMAP-Rule" id="MF_00204"/>
    </source>
</evidence>
<keyword id="KW-0067">ATP-binding</keyword>
<keyword id="KW-0963">Cytoplasm</keyword>
<keyword id="KW-0227">DNA damage</keyword>
<keyword id="KW-0228">DNA excision</keyword>
<keyword id="KW-0234">DNA repair</keyword>
<keyword id="KW-0267">Excision nuclease</keyword>
<keyword id="KW-0547">Nucleotide-binding</keyword>
<keyword id="KW-0742">SOS response</keyword>
<comment type="function">
    <text evidence="1">The UvrABC repair system catalyzes the recognition and processing of DNA lesions. A damage recognition complex composed of 2 UvrA and 2 UvrB subunits scans DNA for abnormalities. Upon binding of the UvrA(2)B(2) complex to a putative damaged site, the DNA wraps around one UvrB monomer. DNA wrap is dependent on ATP binding by UvrB and probably causes local melting of the DNA helix, facilitating insertion of UvrB beta-hairpin between the DNA strands. Then UvrB probes one DNA strand for the presence of a lesion. If a lesion is found the UvrA subunits dissociate and the UvrB-DNA preincision complex is formed. This complex is subsequently bound by UvrC and the second UvrB is released. If no lesion is found, the DNA wraps around the other UvrB subunit that will check the other stand for damage.</text>
</comment>
<comment type="subunit">
    <text evidence="1">Forms a heterotetramer with UvrA during the search for lesions. Interacts with UvrC in an incision complex.</text>
</comment>
<comment type="subcellular location">
    <subcellularLocation>
        <location evidence="1">Cytoplasm</location>
    </subcellularLocation>
</comment>
<comment type="domain">
    <text evidence="1">The beta-hairpin motif is involved in DNA binding.</text>
</comment>
<comment type="similarity">
    <text evidence="1">Belongs to the UvrB family.</text>
</comment>
<organism>
    <name type="scientific">Bacillus cereus (strain ZK / E33L)</name>
    <dbReference type="NCBI Taxonomy" id="288681"/>
    <lineage>
        <taxon>Bacteria</taxon>
        <taxon>Bacillati</taxon>
        <taxon>Bacillota</taxon>
        <taxon>Bacilli</taxon>
        <taxon>Bacillales</taxon>
        <taxon>Bacillaceae</taxon>
        <taxon>Bacillus</taxon>
        <taxon>Bacillus cereus group</taxon>
    </lineage>
</organism>
<accession>Q631I6</accession>
<gene>
    <name evidence="1" type="primary">uvrB</name>
    <name type="ordered locus">BCE33L4860</name>
</gene>
<dbReference type="EMBL" id="CP000001">
    <property type="protein sequence ID" value="AAU20228.1"/>
    <property type="molecule type" value="Genomic_DNA"/>
</dbReference>
<dbReference type="RefSeq" id="WP_000828580.1">
    <property type="nucleotide sequence ID" value="NC_006274.1"/>
</dbReference>
<dbReference type="SMR" id="Q631I6"/>
<dbReference type="KEGG" id="bcz:BCE33L4860"/>
<dbReference type="PATRIC" id="fig|288681.22.peg.493"/>
<dbReference type="Proteomes" id="UP000002612">
    <property type="component" value="Chromosome"/>
</dbReference>
<dbReference type="GO" id="GO:0005737">
    <property type="term" value="C:cytoplasm"/>
    <property type="evidence" value="ECO:0007669"/>
    <property type="project" value="UniProtKB-SubCell"/>
</dbReference>
<dbReference type="GO" id="GO:0009380">
    <property type="term" value="C:excinuclease repair complex"/>
    <property type="evidence" value="ECO:0007669"/>
    <property type="project" value="InterPro"/>
</dbReference>
<dbReference type="GO" id="GO:0005524">
    <property type="term" value="F:ATP binding"/>
    <property type="evidence" value="ECO:0007669"/>
    <property type="project" value="UniProtKB-UniRule"/>
</dbReference>
<dbReference type="GO" id="GO:0016887">
    <property type="term" value="F:ATP hydrolysis activity"/>
    <property type="evidence" value="ECO:0007669"/>
    <property type="project" value="InterPro"/>
</dbReference>
<dbReference type="GO" id="GO:0003677">
    <property type="term" value="F:DNA binding"/>
    <property type="evidence" value="ECO:0007669"/>
    <property type="project" value="UniProtKB-UniRule"/>
</dbReference>
<dbReference type="GO" id="GO:0009381">
    <property type="term" value="F:excinuclease ABC activity"/>
    <property type="evidence" value="ECO:0007669"/>
    <property type="project" value="UniProtKB-UniRule"/>
</dbReference>
<dbReference type="GO" id="GO:0006289">
    <property type="term" value="P:nucleotide-excision repair"/>
    <property type="evidence" value="ECO:0007669"/>
    <property type="project" value="UniProtKB-UniRule"/>
</dbReference>
<dbReference type="GO" id="GO:0009432">
    <property type="term" value="P:SOS response"/>
    <property type="evidence" value="ECO:0007669"/>
    <property type="project" value="UniProtKB-UniRule"/>
</dbReference>
<dbReference type="CDD" id="cd17916">
    <property type="entry name" value="DEXHc_UvrB"/>
    <property type="match status" value="1"/>
</dbReference>
<dbReference type="CDD" id="cd18790">
    <property type="entry name" value="SF2_C_UvrB"/>
    <property type="match status" value="1"/>
</dbReference>
<dbReference type="Gene3D" id="6.10.140.240">
    <property type="match status" value="1"/>
</dbReference>
<dbReference type="Gene3D" id="3.40.50.300">
    <property type="entry name" value="P-loop containing nucleotide triphosphate hydrolases"/>
    <property type="match status" value="3"/>
</dbReference>
<dbReference type="Gene3D" id="4.10.860.10">
    <property type="entry name" value="UVR domain"/>
    <property type="match status" value="1"/>
</dbReference>
<dbReference type="HAMAP" id="MF_00204">
    <property type="entry name" value="UvrB"/>
    <property type="match status" value="1"/>
</dbReference>
<dbReference type="InterPro" id="IPR006935">
    <property type="entry name" value="Helicase/UvrB_N"/>
</dbReference>
<dbReference type="InterPro" id="IPR014001">
    <property type="entry name" value="Helicase_ATP-bd"/>
</dbReference>
<dbReference type="InterPro" id="IPR001650">
    <property type="entry name" value="Helicase_C-like"/>
</dbReference>
<dbReference type="InterPro" id="IPR027417">
    <property type="entry name" value="P-loop_NTPase"/>
</dbReference>
<dbReference type="InterPro" id="IPR001943">
    <property type="entry name" value="UVR_dom"/>
</dbReference>
<dbReference type="InterPro" id="IPR036876">
    <property type="entry name" value="UVR_dom_sf"/>
</dbReference>
<dbReference type="InterPro" id="IPR004807">
    <property type="entry name" value="UvrB"/>
</dbReference>
<dbReference type="InterPro" id="IPR041471">
    <property type="entry name" value="UvrB_inter"/>
</dbReference>
<dbReference type="InterPro" id="IPR024759">
    <property type="entry name" value="UvrB_YAD/RRR_dom"/>
</dbReference>
<dbReference type="NCBIfam" id="NF003673">
    <property type="entry name" value="PRK05298.1"/>
    <property type="match status" value="1"/>
</dbReference>
<dbReference type="NCBIfam" id="TIGR00631">
    <property type="entry name" value="uvrb"/>
    <property type="match status" value="1"/>
</dbReference>
<dbReference type="PANTHER" id="PTHR24029">
    <property type="entry name" value="UVRABC SYSTEM PROTEIN B"/>
    <property type="match status" value="1"/>
</dbReference>
<dbReference type="PANTHER" id="PTHR24029:SF0">
    <property type="entry name" value="UVRABC SYSTEM PROTEIN B"/>
    <property type="match status" value="1"/>
</dbReference>
<dbReference type="Pfam" id="PF00271">
    <property type="entry name" value="Helicase_C"/>
    <property type="match status" value="1"/>
</dbReference>
<dbReference type="Pfam" id="PF04851">
    <property type="entry name" value="ResIII"/>
    <property type="match status" value="1"/>
</dbReference>
<dbReference type="Pfam" id="PF02151">
    <property type="entry name" value="UVR"/>
    <property type="match status" value="1"/>
</dbReference>
<dbReference type="Pfam" id="PF12344">
    <property type="entry name" value="UvrB"/>
    <property type="match status" value="1"/>
</dbReference>
<dbReference type="Pfam" id="PF17757">
    <property type="entry name" value="UvrB_inter"/>
    <property type="match status" value="1"/>
</dbReference>
<dbReference type="SMART" id="SM00487">
    <property type="entry name" value="DEXDc"/>
    <property type="match status" value="1"/>
</dbReference>
<dbReference type="SMART" id="SM00490">
    <property type="entry name" value="HELICc"/>
    <property type="match status" value="1"/>
</dbReference>
<dbReference type="SUPFAM" id="SSF46600">
    <property type="entry name" value="C-terminal UvrC-binding domain of UvrB"/>
    <property type="match status" value="1"/>
</dbReference>
<dbReference type="SUPFAM" id="SSF52540">
    <property type="entry name" value="P-loop containing nucleoside triphosphate hydrolases"/>
    <property type="match status" value="2"/>
</dbReference>
<dbReference type="PROSITE" id="PS51192">
    <property type="entry name" value="HELICASE_ATP_BIND_1"/>
    <property type="match status" value="1"/>
</dbReference>
<dbReference type="PROSITE" id="PS51194">
    <property type="entry name" value="HELICASE_CTER"/>
    <property type="match status" value="1"/>
</dbReference>
<dbReference type="PROSITE" id="PS50151">
    <property type="entry name" value="UVR"/>
    <property type="match status" value="1"/>
</dbReference>
<proteinExistence type="inferred from homology"/>
<reference key="1">
    <citation type="journal article" date="2006" name="J. Bacteriol.">
        <title>Pathogenomic sequence analysis of Bacillus cereus and Bacillus thuringiensis isolates closely related to Bacillus anthracis.</title>
        <authorList>
            <person name="Han C.S."/>
            <person name="Xie G."/>
            <person name="Challacombe J.F."/>
            <person name="Altherr M.R."/>
            <person name="Bhotika S.S."/>
            <person name="Bruce D."/>
            <person name="Campbell C.S."/>
            <person name="Campbell M.L."/>
            <person name="Chen J."/>
            <person name="Chertkov O."/>
            <person name="Cleland C."/>
            <person name="Dimitrijevic M."/>
            <person name="Doggett N.A."/>
            <person name="Fawcett J.J."/>
            <person name="Glavina T."/>
            <person name="Goodwin L.A."/>
            <person name="Hill K.K."/>
            <person name="Hitchcock P."/>
            <person name="Jackson P.J."/>
            <person name="Keim P."/>
            <person name="Kewalramani A.R."/>
            <person name="Longmire J."/>
            <person name="Lucas S."/>
            <person name="Malfatti S."/>
            <person name="McMurry K."/>
            <person name="Meincke L.J."/>
            <person name="Misra M."/>
            <person name="Moseman B.L."/>
            <person name="Mundt M."/>
            <person name="Munk A.C."/>
            <person name="Okinaka R.T."/>
            <person name="Parson-Quintana B."/>
            <person name="Reilly L.P."/>
            <person name="Richardson P."/>
            <person name="Robinson D.L."/>
            <person name="Rubin E."/>
            <person name="Saunders E."/>
            <person name="Tapia R."/>
            <person name="Tesmer J.G."/>
            <person name="Thayer N."/>
            <person name="Thompson L.S."/>
            <person name="Tice H."/>
            <person name="Ticknor L.O."/>
            <person name="Wills P.L."/>
            <person name="Brettin T.S."/>
            <person name="Gilna P."/>
        </authorList>
    </citation>
    <scope>NUCLEOTIDE SEQUENCE [LARGE SCALE GENOMIC DNA]</scope>
    <source>
        <strain>ZK / E33L</strain>
    </source>
</reference>
<sequence>MKRQFEIVSAYSPQGDQPVAIEKLVEGINSGKKKQVLLGATGTGKTFTISNVIKEVQKPTLVMAHNKTLAGQLYSELKDFFPNNAVEYFVSYYDYYQPEAYVPQTDTFIEKDAQINDEIDKLRHSATSALFERDDVIIVASVSCIYGLGSPEEYRELVVSLRVGMEKDRNQLLRELVDVQYGRNDIDFKRGTFRVRGDVVEIFPASLDEHCIRIEFFGDEIDRIREVNALTGEVLAERDHVAIFPASHFVTREEKMKVAIENIEKELEERLKELNDNGKLLEAQRIEQRTRYDLEMMREMGFCSGIENYSRHLTLRPAGATPYTLLDYFPEDFLIVMDESHVSVPQVRAMYNGDQARKQVLVDHGFRLPSALDNRPLTFDEFEEKTNQVIYVSATPGPYELEQSPEVIEQIIRPTGLLDPPIDIRPIEGQIDDLLGEIQDRIAKNERVLITTLTKKMSEDLTDYLKDVGIKVNYLHSEVKTLERIEIIRDLRLGKFDVLVGINLLREGLDIPEVSLVAILDADKEGFLRSERSLIQTIGRAARNENGRVIMYADRITRSMGIAIEETQRRRSIQEAYNEEYGITPKTIQKGVRDVIRATTAAEEPETYEATPAKKMTKKEREKTIAKMEAEMKEAAKALDFERAAELRDLLLELKAEG</sequence>